<evidence type="ECO:0000250" key="1">
    <source>
        <dbReference type="UniProtKB" id="P11558"/>
    </source>
</evidence>
<evidence type="ECO:0000250" key="2">
    <source>
        <dbReference type="UniProtKB" id="Q8THH1"/>
    </source>
</evidence>
<evidence type="ECO:0000269" key="3">
    <source>
    </source>
</evidence>
<evidence type="ECO:0000269" key="4">
    <source>
    </source>
</evidence>
<evidence type="ECO:0000305" key="5"/>
<evidence type="ECO:0000305" key="6">
    <source>
    </source>
</evidence>
<evidence type="ECO:0007744" key="7">
    <source>
        <dbReference type="PDB" id="1E6Y"/>
    </source>
</evidence>
<evidence type="ECO:0007829" key="8">
    <source>
        <dbReference type="PDB" id="1E6Y"/>
    </source>
</evidence>
<dbReference type="EC" id="2.8.4.1" evidence="1"/>
<dbReference type="EMBL" id="Y00158">
    <property type="protein sequence ID" value="CAA68357.1"/>
    <property type="molecule type" value="Genomic_DNA"/>
</dbReference>
<dbReference type="EMBL" id="CP000099">
    <property type="protein sequence ID" value="AAZ69867.1"/>
    <property type="molecule type" value="Genomic_DNA"/>
</dbReference>
<dbReference type="PIR" id="E29525">
    <property type="entry name" value="E29525"/>
</dbReference>
<dbReference type="PDB" id="1E6Y">
    <property type="method" value="X-ray"/>
    <property type="resolution" value="1.60 A"/>
    <property type="chains" value="A/D=2-570"/>
</dbReference>
<dbReference type="PDBsum" id="1E6Y"/>
<dbReference type="SMR" id="P07962"/>
<dbReference type="STRING" id="269797.Mbar_A0893"/>
<dbReference type="iPTMnet" id="P07962"/>
<dbReference type="PaxDb" id="269797-Mbar_A0893"/>
<dbReference type="GeneID" id="24821497"/>
<dbReference type="KEGG" id="mba:Mbar_A0893"/>
<dbReference type="eggNOG" id="arCOG04857">
    <property type="taxonomic scope" value="Archaea"/>
</dbReference>
<dbReference type="HOGENOM" id="CLU_493170_0_0_2"/>
<dbReference type="OrthoDB" id="52468at2157"/>
<dbReference type="BRENDA" id="2.8.4.1">
    <property type="organism ID" value="3250"/>
</dbReference>
<dbReference type="UniPathway" id="UPA00646">
    <property type="reaction ID" value="UER00699"/>
</dbReference>
<dbReference type="EvolutionaryTrace" id="P07962"/>
<dbReference type="GO" id="GO:0005737">
    <property type="term" value="C:cytoplasm"/>
    <property type="evidence" value="ECO:0007669"/>
    <property type="project" value="UniProtKB-SubCell"/>
</dbReference>
<dbReference type="GO" id="GO:0050524">
    <property type="term" value="F:coenzyme-B sulfoethylthiotransferase activity"/>
    <property type="evidence" value="ECO:0007669"/>
    <property type="project" value="UniProtKB-EC"/>
</dbReference>
<dbReference type="GO" id="GO:0046872">
    <property type="term" value="F:metal ion binding"/>
    <property type="evidence" value="ECO:0007669"/>
    <property type="project" value="UniProtKB-KW"/>
</dbReference>
<dbReference type="GO" id="GO:0015948">
    <property type="term" value="P:methanogenesis"/>
    <property type="evidence" value="ECO:0007669"/>
    <property type="project" value="UniProtKB-KW"/>
</dbReference>
<dbReference type="Gene3D" id="3.30.70.470">
    <property type="match status" value="1"/>
</dbReference>
<dbReference type="Gene3D" id="1.20.840.10">
    <property type="entry name" value="Methyl-coenzyme M reductase, alpha/beta subunit, C-terminal"/>
    <property type="match status" value="1"/>
</dbReference>
<dbReference type="Gene3D" id="3.90.390.10">
    <property type="entry name" value="Methyl-coenzyme M Reductase, Chain A, domain 1"/>
    <property type="match status" value="1"/>
</dbReference>
<dbReference type="InterPro" id="IPR016212">
    <property type="entry name" value="Me_CoM_Rdtase_asu"/>
</dbReference>
<dbReference type="InterPro" id="IPR008924">
    <property type="entry name" value="Me_CoM_Rdtase_asu/bsu_C"/>
</dbReference>
<dbReference type="InterPro" id="IPR009047">
    <property type="entry name" value="Me_CoM_Rdtase_asu_C"/>
</dbReference>
<dbReference type="InterPro" id="IPR003183">
    <property type="entry name" value="Me_CoM_Rdtase_asu_N"/>
</dbReference>
<dbReference type="InterPro" id="IPR015811">
    <property type="entry name" value="Me_CoM_Rdtase_asu_N_sub1"/>
</dbReference>
<dbReference type="InterPro" id="IPR015823">
    <property type="entry name" value="Me_CoM_Rdtase_asu_N_sub2"/>
</dbReference>
<dbReference type="InterPro" id="IPR009024">
    <property type="entry name" value="Me_CoM_Rdtase_Fd-like_fold"/>
</dbReference>
<dbReference type="NCBIfam" id="TIGR03256">
    <property type="entry name" value="met_CoM_red_alp"/>
    <property type="match status" value="1"/>
</dbReference>
<dbReference type="Pfam" id="PF02249">
    <property type="entry name" value="MCR_alpha"/>
    <property type="match status" value="1"/>
</dbReference>
<dbReference type="Pfam" id="PF02745">
    <property type="entry name" value="MCR_alpha_N"/>
    <property type="match status" value="1"/>
</dbReference>
<dbReference type="PIRSF" id="PIRSF000262">
    <property type="entry name" value="MCR_alpha"/>
    <property type="match status" value="1"/>
</dbReference>
<dbReference type="SUPFAM" id="SSF48081">
    <property type="entry name" value="Methyl-coenzyme M reductase alpha and beta chain C-terminal domain"/>
    <property type="match status" value="1"/>
</dbReference>
<dbReference type="SUPFAM" id="SSF55088">
    <property type="entry name" value="Methyl-coenzyme M reductase subunits"/>
    <property type="match status" value="1"/>
</dbReference>
<name>MCRA_METBF</name>
<protein>
    <recommendedName>
        <fullName>Methyl-coenzyme M reductase subunit alpha</fullName>
        <ecNumber evidence="1">2.8.4.1</ecNumber>
    </recommendedName>
    <alternativeName>
        <fullName>Coenzyme-B sulfoethylthiotransferase alpha</fullName>
    </alternativeName>
</protein>
<reference key="1">
    <citation type="journal article" date="1987" name="Nucleic Acids Res.">
        <title>Nucleotide sequence of the methyl coenzyme M reductase gene cluster from Methanosarcina barkeri.</title>
        <authorList>
            <person name="Bokranz M."/>
            <person name="Klein A."/>
        </authorList>
    </citation>
    <scope>NUCLEOTIDE SEQUENCE [GENOMIC DNA]</scope>
</reference>
<reference key="2">
    <citation type="journal article" date="2006" name="J. Bacteriol.">
        <title>The Methanosarcina barkeri genome: comparative analysis with Methanosarcina acetivorans and Methanosarcina mazei reveals extensive rearrangement within methanosarcinal genomes.</title>
        <authorList>
            <person name="Maeder D.L."/>
            <person name="Anderson I."/>
            <person name="Brettin T.S."/>
            <person name="Bruce D.C."/>
            <person name="Gilna P."/>
            <person name="Han C.S."/>
            <person name="Lapidus A."/>
            <person name="Metcalf W.W."/>
            <person name="Saunders E."/>
            <person name="Tapia R."/>
            <person name="Sowers K.R."/>
        </authorList>
    </citation>
    <scope>NUCLEOTIDE SEQUENCE [LARGE SCALE GENOMIC DNA]</scope>
    <source>
        <strain>Fusaro / DSM 804</strain>
    </source>
</reference>
<reference key="3">
    <citation type="journal article" date="2016" name="Angew. Chem. Int. Ed. Engl.">
        <title>Didehydroaspartate Modification in Methyl-CoenzymeM Reductase Catalyzing Methane Formation.</title>
        <authorList>
            <person name="Wagner T."/>
            <person name="Kahnt J."/>
            <person name="Ermler U."/>
            <person name="Shima S."/>
        </authorList>
    </citation>
    <scope>METHYLATION AT CYS-472</scope>
    <scope>THIOCARBOXYLATION AT GLY-465</scope>
    <scope>DEHYDROGENATION AT ASP-470</scope>
    <source>
        <strain>Fusaro / DSM 804</strain>
    </source>
</reference>
<reference evidence="7" key="4">
    <citation type="journal article" date="2000" name="J. Mol. Biol.">
        <title>Comparison of three methyl-coenzyme M reductases from phylogenetically distant organisms: unusual amino acid modification, conservation and adaptation.</title>
        <authorList>
            <person name="Grabarse W."/>
            <person name="Mahlert F."/>
            <person name="Shima S."/>
            <person name="Thauer R.K."/>
            <person name="Ermler U."/>
        </authorList>
    </citation>
    <scope>X-RAY CRYSTALLOGRAPHY (1.6 ANGSTROMS) IN COMPLEX WITH COENZYME F430; COENZYME B; COENZYME M AND MCR SUBUNITS BETA AND GAMMA</scope>
    <scope>FUNCTION</scope>
    <scope>COFACTOR</scope>
    <scope>METHYLATION AT HIS-271; ARG-285 AND CYS-472</scope>
    <scope>THIOCARBOXYLATION AT GLY-465</scope>
    <scope>SUBUNIT</scope>
    <source>
        <strain>Fusaro / DSM 804</strain>
    </source>
</reference>
<keyword id="KW-0002">3D-structure</keyword>
<keyword id="KW-0963">Cytoplasm</keyword>
<keyword id="KW-0479">Metal-binding</keyword>
<keyword id="KW-0484">Methanogenesis</keyword>
<keyword id="KW-0488">Methylation</keyword>
<keyword id="KW-0533">Nickel</keyword>
<keyword id="KW-0808">Transferase</keyword>
<organism>
    <name type="scientific">Methanosarcina barkeri (strain Fusaro / DSM 804)</name>
    <dbReference type="NCBI Taxonomy" id="269797"/>
    <lineage>
        <taxon>Archaea</taxon>
        <taxon>Methanobacteriati</taxon>
        <taxon>Methanobacteriota</taxon>
        <taxon>Stenosarchaea group</taxon>
        <taxon>Methanomicrobia</taxon>
        <taxon>Methanosarcinales</taxon>
        <taxon>Methanosarcinaceae</taxon>
        <taxon>Methanosarcina</taxon>
    </lineage>
</organism>
<gene>
    <name type="primary">mcrA</name>
    <name type="ordered locus">Mbar_A0893</name>
</gene>
<feature type="chain" id="PRO_0000147449" description="Methyl-coenzyme M reductase subunit alpha">
    <location>
        <begin position="1"/>
        <end position="570"/>
    </location>
</feature>
<feature type="binding site" description="axial binding residue" evidence="3 7">
    <location>
        <position position="161"/>
    </location>
    <ligand>
        <name>coenzyme F430</name>
        <dbReference type="ChEBI" id="CHEBI:60540"/>
    </ligand>
    <ligandPart>
        <name>Ni</name>
        <dbReference type="ChEBI" id="CHEBI:28112"/>
    </ligandPart>
</feature>
<feature type="binding site" description="in chain A" evidence="3 7">
    <location>
        <position position="239"/>
    </location>
    <ligand>
        <name>coenzyme B</name>
        <dbReference type="ChEBI" id="CHEBI:58596"/>
        <note>ligand shared between two alpha subunits</note>
    </ligand>
</feature>
<feature type="binding site" description="in chain A" evidence="3 7">
    <location>
        <begin position="270"/>
        <end position="271"/>
    </location>
    <ligand>
        <name>coenzyme B</name>
        <dbReference type="ChEBI" id="CHEBI:58596"/>
        <note>ligand shared between two alpha subunits</note>
    </ligand>
</feature>
<feature type="binding site" description="in chain B" evidence="3 7">
    <location>
        <position position="284"/>
    </location>
    <ligand>
        <name>coenzyme B</name>
        <dbReference type="ChEBI" id="CHEBI:58596"/>
        <note>ligand shared between two alpha subunits</note>
    </ligand>
</feature>
<feature type="binding site" evidence="3 7">
    <location>
        <position position="346"/>
    </location>
    <ligand>
        <name>coenzyme M</name>
        <dbReference type="ChEBI" id="CHEBI:58319"/>
    </ligand>
</feature>
<feature type="binding site" evidence="3 7">
    <location>
        <position position="464"/>
    </location>
    <ligand>
        <name>coenzyme M</name>
        <dbReference type="ChEBI" id="CHEBI:58319"/>
    </ligand>
</feature>
<feature type="modified residue" description="Pros-methylhistidine" evidence="3">
    <location>
        <position position="271"/>
    </location>
</feature>
<feature type="modified residue" description="5-methylarginine" evidence="3">
    <location>
        <position position="285"/>
    </location>
</feature>
<feature type="modified residue" description="1-thioglycine" evidence="3 4">
    <location>
        <position position="465"/>
    </location>
</feature>
<feature type="modified residue" description="(Z)-2,3-didehydroaspartate" evidence="4">
    <location>
        <position position="470"/>
    </location>
</feature>
<feature type="modified residue" description="S-methylcysteine" evidence="3 4">
    <location>
        <position position="472"/>
    </location>
</feature>
<feature type="helix" evidence="8">
    <location>
        <begin position="3"/>
        <end position="17"/>
    </location>
</feature>
<feature type="helix" evidence="8">
    <location>
        <begin position="43"/>
        <end position="45"/>
    </location>
</feature>
<feature type="helix" evidence="8">
    <location>
        <begin position="47"/>
        <end position="63"/>
    </location>
</feature>
<feature type="helix" evidence="8">
    <location>
        <begin position="70"/>
        <end position="72"/>
    </location>
</feature>
<feature type="strand" evidence="8">
    <location>
        <begin position="73"/>
        <end position="76"/>
    </location>
</feature>
<feature type="strand" evidence="8">
    <location>
        <begin position="86"/>
        <end position="88"/>
    </location>
</feature>
<feature type="helix" evidence="8">
    <location>
        <begin position="97"/>
        <end position="100"/>
    </location>
</feature>
<feature type="helix" evidence="8">
    <location>
        <begin position="102"/>
        <end position="104"/>
    </location>
</feature>
<feature type="helix" evidence="8">
    <location>
        <begin position="106"/>
        <end position="116"/>
    </location>
</feature>
<feature type="strand" evidence="8">
    <location>
        <begin position="118"/>
        <end position="123"/>
    </location>
</feature>
<feature type="helix" evidence="8">
    <location>
        <begin position="124"/>
        <end position="134"/>
    </location>
</feature>
<feature type="helix" evidence="8">
    <location>
        <begin position="140"/>
        <end position="153"/>
    </location>
</feature>
<feature type="turn" evidence="8">
    <location>
        <begin position="154"/>
        <end position="156"/>
    </location>
</feature>
<feature type="helix" evidence="8">
    <location>
        <begin position="169"/>
        <end position="171"/>
    </location>
</feature>
<feature type="strand" evidence="8">
    <location>
        <begin position="176"/>
        <end position="182"/>
    </location>
</feature>
<feature type="helix" evidence="8">
    <location>
        <begin position="184"/>
        <end position="187"/>
    </location>
</feature>
<feature type="helix" evidence="8">
    <location>
        <begin position="192"/>
        <end position="194"/>
    </location>
</feature>
<feature type="helix" evidence="8">
    <location>
        <begin position="198"/>
        <end position="201"/>
    </location>
</feature>
<feature type="helix" evidence="8">
    <location>
        <begin position="204"/>
        <end position="214"/>
    </location>
</feature>
<feature type="strand" evidence="8">
    <location>
        <begin position="218"/>
        <end position="223"/>
    </location>
</feature>
<feature type="helix" evidence="8">
    <location>
        <begin position="226"/>
        <end position="231"/>
    </location>
</feature>
<feature type="helix" evidence="8">
    <location>
        <begin position="236"/>
        <end position="252"/>
    </location>
</feature>
<feature type="helix" evidence="8">
    <location>
        <begin position="260"/>
        <end position="270"/>
    </location>
</feature>
<feature type="turn" evidence="8">
    <location>
        <begin position="271"/>
        <end position="273"/>
    </location>
</feature>
<feature type="helix" evidence="8">
    <location>
        <begin position="283"/>
        <end position="285"/>
    </location>
</feature>
<feature type="strand" evidence="8">
    <location>
        <begin position="289"/>
        <end position="291"/>
    </location>
</feature>
<feature type="helix" evidence="8">
    <location>
        <begin position="292"/>
        <end position="294"/>
    </location>
</feature>
<feature type="helix" evidence="8">
    <location>
        <begin position="297"/>
        <end position="303"/>
    </location>
</feature>
<feature type="helix" evidence="8">
    <location>
        <begin position="306"/>
        <end position="309"/>
    </location>
</feature>
<feature type="helix" evidence="8">
    <location>
        <begin position="313"/>
        <end position="330"/>
    </location>
</feature>
<feature type="helix" evidence="8">
    <location>
        <begin position="331"/>
        <end position="336"/>
    </location>
</feature>
<feature type="helix" evidence="8">
    <location>
        <begin position="344"/>
        <end position="348"/>
    </location>
</feature>
<feature type="turn" evidence="8">
    <location>
        <begin position="349"/>
        <end position="351"/>
    </location>
</feature>
<feature type="helix" evidence="8">
    <location>
        <begin position="355"/>
        <end position="370"/>
    </location>
</feature>
<feature type="strand" evidence="8">
    <location>
        <begin position="379"/>
        <end position="381"/>
    </location>
</feature>
<feature type="helix" evidence="8">
    <location>
        <begin position="387"/>
        <end position="407"/>
    </location>
</feature>
<feature type="helix" evidence="8">
    <location>
        <begin position="409"/>
        <end position="414"/>
    </location>
</feature>
<feature type="helix" evidence="8">
    <location>
        <begin position="418"/>
        <end position="437"/>
    </location>
</feature>
<feature type="helix" evidence="8">
    <location>
        <begin position="440"/>
        <end position="458"/>
    </location>
</feature>
<feature type="helix" evidence="8">
    <location>
        <begin position="468"/>
        <end position="471"/>
    </location>
</feature>
<feature type="helix" evidence="8">
    <location>
        <begin position="473"/>
        <end position="477"/>
    </location>
</feature>
<feature type="turn" evidence="8">
    <location>
        <begin position="482"/>
        <end position="484"/>
    </location>
</feature>
<feature type="turn" evidence="8">
    <location>
        <begin position="488"/>
        <end position="490"/>
    </location>
</feature>
<feature type="helix" evidence="8">
    <location>
        <begin position="496"/>
        <end position="498"/>
    </location>
</feature>
<feature type="strand" evidence="8">
    <location>
        <begin position="502"/>
        <end position="504"/>
    </location>
</feature>
<feature type="helix" evidence="8">
    <location>
        <begin position="505"/>
        <end position="517"/>
    </location>
</feature>
<feature type="turn" evidence="8">
    <location>
        <begin position="518"/>
        <end position="520"/>
    </location>
</feature>
<feature type="helix" evidence="8">
    <location>
        <begin position="527"/>
        <end position="532"/>
    </location>
</feature>
<feature type="strand" evidence="8">
    <location>
        <begin position="538"/>
        <end position="540"/>
    </location>
</feature>
<feature type="helix" evidence="8">
    <location>
        <begin position="545"/>
        <end position="553"/>
    </location>
</feature>
<feature type="helix" evidence="8">
    <location>
        <begin position="564"/>
        <end position="566"/>
    </location>
</feature>
<sequence>MAADIFSKFKKDMEVKFAQEFGSNKQTGGDITDKTAKFLRLGPEQDPRKVEMIKAGKEIAEKRGIAFYNPMMHSGAPLGQRAITPYTISGTDIVCEPDDLHYVNNAAMQQMWDDIRRTCIVGLDMAHETLEKRLGKEVTPETINHYLEVLNHAMPGAAVVQEMMVETHPALVDDCYVKVFTGDDALADEIDKQFLIDINKEFSEEQAAQIKASIGKTSWQAIHIPTIVSRTTDGAQTSRWAAMQIGMSFISAYAMCAGEAAVADLSFAAKHAALVSMGEMLPARRARGPNEPGGLSFGHLSDIVQTSRVSEDPAKIALEVVGAGCMLYDQIWLGSYMSGGVGFTQYATAAYTDDILDNNTYYDVDYINDKYNGAATVGKDNKVKASLEVVKDIATESTLYGIETYEKFPTALEDHFGGSQRATVLAAAAGVACSLATGNANAGLSGWYLSMYLHKEAWGRLGFFGFDLQDQCGATNVLSYQGDEGLPDELRGPNYPNYAMNVGHQGGYAGIAQAAHSGRGDAFTVNPLLKVCFADDLLPFNFAEPRREFGRGAIREFVPAGERSLVIPAK</sequence>
<comment type="function">
    <text evidence="6">Component of the methyl-coenzyme M reductase (MCR) I that catalyzes the reductive cleavage of methyl-coenzyme M (CoM-S-CH3 or 2-(methylthio)ethanesulfonate) using coenzyme B (CoB or 7-mercaptoheptanoylthreonine phosphate) as reductant which results in the production of methane and the mixed heterodisulfide of CoB and CoM (CoM-S-S-CoB). This is the final step in methanogenesis.</text>
</comment>
<comment type="catalytic activity">
    <reaction evidence="1">
        <text>coenzyme B + methyl-coenzyme M = methane + coenzyme M-coenzyme B heterodisulfide</text>
        <dbReference type="Rhea" id="RHEA:12532"/>
        <dbReference type="ChEBI" id="CHEBI:16183"/>
        <dbReference type="ChEBI" id="CHEBI:58286"/>
        <dbReference type="ChEBI" id="CHEBI:58411"/>
        <dbReference type="ChEBI" id="CHEBI:58596"/>
        <dbReference type="EC" id="2.8.4.1"/>
    </reaction>
    <physiologicalReaction direction="left-to-right" evidence="1">
        <dbReference type="Rhea" id="RHEA:12533"/>
    </physiologicalReaction>
</comment>
<comment type="cofactor">
    <cofactor evidence="3">
        <name>coenzyme F430</name>
        <dbReference type="ChEBI" id="CHEBI:60540"/>
    </cofactor>
    <text evidence="1 3">Binds 2 coenzyme F430 non-covalently per MCR complex. Coenzyme F430 is a yellow nickel porphinoid (PubMed:11023796). Methyl-coenzyme-M reductase is activated when the enzyme-bound coenzyme F430 is reduced to the Ni(I) oxidation state (By similarity).</text>
</comment>
<comment type="pathway">
    <text evidence="1">One-carbon metabolism; methyl-coenzyme M reduction; methane from methyl-coenzyme M: step 1/1.</text>
</comment>
<comment type="subunit">
    <text evidence="3">MCR is a hexamer of two alpha, two beta, and two gamma chains, forming a dimer of heterotrimers.</text>
</comment>
<comment type="subcellular location">
    <subcellularLocation>
        <location evidence="1">Cytoplasm</location>
    </subcellularLocation>
</comment>
<comment type="PTM">
    <text evidence="2 3 4">The alpha subunit contains five modified amino acids near the active site region (PubMed:11023796, PubMed:27467699). Is methylated on His-271, Arg-285 and Cys-472, probably by the action of specific S-adenosylmethionine-dependent methyltransferases. Also contains a thioglycine at position 465, forming a thiopeptide bond (PubMed:11023796, PubMed:27467699). Contains a didehydroaspartate residue at position 470 (PubMed:27467699). The methylation on C5 of Arg-285 is a post-translational methylation not essential in vivo, but which plays a role for the stability and structural integrity of MCR (By similarity). Does not show a methylation at Gln-420, as shown for M.marburgensis (PubMed:11023796).</text>
</comment>
<comment type="similarity">
    <text evidence="5">Belongs to the methyl-coenzyme M reductase alpha subunit family.</text>
</comment>
<accession>P07962</accession>
<accession>Q46E25</accession>
<proteinExistence type="evidence at protein level"/>